<keyword id="KW-0143">Chaperone</keyword>
<keyword id="KW-0963">Cytoplasm</keyword>
<accession>B7GY35</accession>
<gene>
    <name evidence="1" type="primary">groES</name>
    <name evidence="1" type="synonym">groS</name>
    <name type="ordered locus">ABBFA_000811</name>
</gene>
<comment type="function">
    <text evidence="1">Together with the chaperonin GroEL, plays an essential role in assisting protein folding. The GroEL-GroES system forms a nano-cage that allows encapsulation of the non-native substrate proteins and provides a physical environment optimized to promote and accelerate protein folding. GroES binds to the apical surface of the GroEL ring, thereby capping the opening of the GroEL channel.</text>
</comment>
<comment type="subunit">
    <text evidence="1">Heptamer of 7 subunits arranged in a ring. Interacts with the chaperonin GroEL.</text>
</comment>
<comment type="subcellular location">
    <subcellularLocation>
        <location evidence="1">Cytoplasm</location>
    </subcellularLocation>
</comment>
<comment type="similarity">
    <text evidence="1">Belongs to the GroES chaperonin family.</text>
</comment>
<dbReference type="EMBL" id="CP001172">
    <property type="protein sequence ID" value="ACJ57103.1"/>
    <property type="molecule type" value="Genomic_DNA"/>
</dbReference>
<dbReference type="RefSeq" id="WP_000065579.1">
    <property type="nucleotide sequence ID" value="NZ_CP001172.1"/>
</dbReference>
<dbReference type="SMR" id="B7GY35"/>
<dbReference type="HOGENOM" id="CLU_132825_2_0_6"/>
<dbReference type="Proteomes" id="UP000006924">
    <property type="component" value="Chromosome"/>
</dbReference>
<dbReference type="GO" id="GO:0005737">
    <property type="term" value="C:cytoplasm"/>
    <property type="evidence" value="ECO:0007669"/>
    <property type="project" value="UniProtKB-SubCell"/>
</dbReference>
<dbReference type="GO" id="GO:0005524">
    <property type="term" value="F:ATP binding"/>
    <property type="evidence" value="ECO:0007669"/>
    <property type="project" value="InterPro"/>
</dbReference>
<dbReference type="GO" id="GO:0046872">
    <property type="term" value="F:metal ion binding"/>
    <property type="evidence" value="ECO:0007669"/>
    <property type="project" value="TreeGrafter"/>
</dbReference>
<dbReference type="GO" id="GO:0044183">
    <property type="term" value="F:protein folding chaperone"/>
    <property type="evidence" value="ECO:0007669"/>
    <property type="project" value="InterPro"/>
</dbReference>
<dbReference type="GO" id="GO:0051087">
    <property type="term" value="F:protein-folding chaperone binding"/>
    <property type="evidence" value="ECO:0007669"/>
    <property type="project" value="TreeGrafter"/>
</dbReference>
<dbReference type="GO" id="GO:0051082">
    <property type="term" value="F:unfolded protein binding"/>
    <property type="evidence" value="ECO:0007669"/>
    <property type="project" value="TreeGrafter"/>
</dbReference>
<dbReference type="GO" id="GO:0051085">
    <property type="term" value="P:chaperone cofactor-dependent protein refolding"/>
    <property type="evidence" value="ECO:0007669"/>
    <property type="project" value="TreeGrafter"/>
</dbReference>
<dbReference type="CDD" id="cd00320">
    <property type="entry name" value="cpn10"/>
    <property type="match status" value="1"/>
</dbReference>
<dbReference type="FunFam" id="2.30.33.40:FF:000001">
    <property type="entry name" value="10 kDa chaperonin"/>
    <property type="match status" value="1"/>
</dbReference>
<dbReference type="Gene3D" id="2.30.33.40">
    <property type="entry name" value="GroES chaperonin"/>
    <property type="match status" value="1"/>
</dbReference>
<dbReference type="HAMAP" id="MF_00580">
    <property type="entry name" value="CH10"/>
    <property type="match status" value="1"/>
</dbReference>
<dbReference type="InterPro" id="IPR020818">
    <property type="entry name" value="Chaperonin_GroES"/>
</dbReference>
<dbReference type="InterPro" id="IPR037124">
    <property type="entry name" value="Chaperonin_GroES_sf"/>
</dbReference>
<dbReference type="InterPro" id="IPR018369">
    <property type="entry name" value="Chaprnonin_Cpn10_CS"/>
</dbReference>
<dbReference type="InterPro" id="IPR011032">
    <property type="entry name" value="GroES-like_sf"/>
</dbReference>
<dbReference type="NCBIfam" id="NF001527">
    <property type="entry name" value="PRK00364.1-2"/>
    <property type="match status" value="1"/>
</dbReference>
<dbReference type="NCBIfam" id="NF001529">
    <property type="entry name" value="PRK00364.1-5"/>
    <property type="match status" value="1"/>
</dbReference>
<dbReference type="NCBIfam" id="NF001531">
    <property type="entry name" value="PRK00364.2-2"/>
    <property type="match status" value="1"/>
</dbReference>
<dbReference type="NCBIfam" id="NF001533">
    <property type="entry name" value="PRK00364.2-4"/>
    <property type="match status" value="1"/>
</dbReference>
<dbReference type="PANTHER" id="PTHR10772">
    <property type="entry name" value="10 KDA HEAT SHOCK PROTEIN"/>
    <property type="match status" value="1"/>
</dbReference>
<dbReference type="PANTHER" id="PTHR10772:SF58">
    <property type="entry name" value="CO-CHAPERONIN GROES"/>
    <property type="match status" value="1"/>
</dbReference>
<dbReference type="Pfam" id="PF00166">
    <property type="entry name" value="Cpn10"/>
    <property type="match status" value="1"/>
</dbReference>
<dbReference type="PRINTS" id="PR00297">
    <property type="entry name" value="CHAPERONIN10"/>
</dbReference>
<dbReference type="SMART" id="SM00883">
    <property type="entry name" value="Cpn10"/>
    <property type="match status" value="1"/>
</dbReference>
<dbReference type="SUPFAM" id="SSF50129">
    <property type="entry name" value="GroES-like"/>
    <property type="match status" value="1"/>
</dbReference>
<dbReference type="PROSITE" id="PS00681">
    <property type="entry name" value="CHAPERONINS_CPN10"/>
    <property type="match status" value="1"/>
</dbReference>
<reference key="1">
    <citation type="journal article" date="2008" name="J. Bacteriol.">
        <title>Comparative genome sequence analysis of multidrug-resistant Acinetobacter baumannii.</title>
        <authorList>
            <person name="Adams M.D."/>
            <person name="Goglin K."/>
            <person name="Molyneaux N."/>
            <person name="Hujer K.M."/>
            <person name="Lavender H."/>
            <person name="Jamison J.J."/>
            <person name="MacDonald I.J."/>
            <person name="Martin K.M."/>
            <person name="Russo T."/>
            <person name="Campagnari A.A."/>
            <person name="Hujer A.M."/>
            <person name="Bonomo R.A."/>
            <person name="Gill S.R."/>
        </authorList>
    </citation>
    <scope>NUCLEOTIDE SEQUENCE [LARGE SCALE GENOMIC DNA]</scope>
    <source>
        <strain>AB307-0294</strain>
    </source>
</reference>
<proteinExistence type="inferred from homology"/>
<organism>
    <name type="scientific">Acinetobacter baumannii (strain AB307-0294)</name>
    <dbReference type="NCBI Taxonomy" id="557600"/>
    <lineage>
        <taxon>Bacteria</taxon>
        <taxon>Pseudomonadati</taxon>
        <taxon>Pseudomonadota</taxon>
        <taxon>Gammaproteobacteria</taxon>
        <taxon>Moraxellales</taxon>
        <taxon>Moraxellaceae</taxon>
        <taxon>Acinetobacter</taxon>
        <taxon>Acinetobacter calcoaceticus/baumannii complex</taxon>
    </lineage>
</organism>
<sequence length="96" mass="10157">MSNIRPLHDRVVIRRVEEETKTAGGILLPGSAAEKPSQGEVIAVGNGQITDNGVRALDVKVGDKVLFGTYAGTTVKVNGEELLIMKESDILAVLEG</sequence>
<feature type="chain" id="PRO_1000129611" description="Co-chaperonin GroES">
    <location>
        <begin position="1"/>
        <end position="96"/>
    </location>
</feature>
<evidence type="ECO:0000255" key="1">
    <source>
        <dbReference type="HAMAP-Rule" id="MF_00580"/>
    </source>
</evidence>
<protein>
    <recommendedName>
        <fullName evidence="1">Co-chaperonin GroES</fullName>
    </recommendedName>
    <alternativeName>
        <fullName evidence="1">10 kDa chaperonin</fullName>
    </alternativeName>
    <alternativeName>
        <fullName evidence="1">Chaperonin-10</fullName>
        <shortName evidence="1">Cpn10</shortName>
    </alternativeName>
</protein>
<name>CH10_ACIB3</name>